<reference key="1">
    <citation type="journal article" date="2008" name="Environ. Microbiol.">
        <title>The genome of Erwinia tasmaniensis strain Et1/99, a non-pathogenic bacterium in the genus Erwinia.</title>
        <authorList>
            <person name="Kube M."/>
            <person name="Migdoll A.M."/>
            <person name="Mueller I."/>
            <person name="Kuhl H."/>
            <person name="Beck A."/>
            <person name="Reinhardt R."/>
            <person name="Geider K."/>
        </authorList>
    </citation>
    <scope>NUCLEOTIDE SEQUENCE [LARGE SCALE GENOMIC DNA]</scope>
    <source>
        <strain>DSM 17950 / CFBP 7177 / CIP 109463 / NCPPB 4357 / Et1/99</strain>
    </source>
</reference>
<gene>
    <name evidence="1" type="primary">pepQ</name>
    <name type="ordered locus">ETA_02470</name>
</gene>
<organism>
    <name type="scientific">Erwinia tasmaniensis (strain DSM 17950 / CFBP 7177 / CIP 109463 / NCPPB 4357 / Et1/99)</name>
    <dbReference type="NCBI Taxonomy" id="465817"/>
    <lineage>
        <taxon>Bacteria</taxon>
        <taxon>Pseudomonadati</taxon>
        <taxon>Pseudomonadota</taxon>
        <taxon>Gammaproteobacteria</taxon>
        <taxon>Enterobacterales</taxon>
        <taxon>Erwiniaceae</taxon>
        <taxon>Erwinia</taxon>
    </lineage>
</organism>
<evidence type="ECO:0000255" key="1">
    <source>
        <dbReference type="HAMAP-Rule" id="MF_01279"/>
    </source>
</evidence>
<keyword id="KW-0224">Dipeptidase</keyword>
<keyword id="KW-0378">Hydrolase</keyword>
<keyword id="KW-0464">Manganese</keyword>
<keyword id="KW-0479">Metal-binding</keyword>
<keyword id="KW-0482">Metalloprotease</keyword>
<keyword id="KW-0645">Protease</keyword>
<keyword id="KW-1185">Reference proteome</keyword>
<sequence>MESLVTLYQEHIKTLQQRAQQVLARHSLDAMLIHSGELLTVFLDDHTYPFKVNPQFKAWVPVTQVPNCWLWIDGVNKPKLWFYSPVDYWHDVEPLPQSFWTGEIDIVPLKNADDIARLLPTQRQNVAYIGPVPARATQLGFNTEAINPPGVIDFLHYHRAYKTGYELYCLRQAQVIAVTGHRAAKEAFKSRLSEFDINVAYLSATGHRDTDVPYGNIIALNEHAAVLHYTKLDQQPPEKRRSFLIDAGAEYQGYAADLTRSYAASEGSDYAQLIKDMNKEELELIATMKTGVRYTEYHQQMHYRIASLLLKHQLVNGLTAEAMVKENLTGPFMPHGIGHSLGLQVHDVAGFMQDDRGTHLAAPQQYPYLRCTRVLEPGMVLTIEPGIYFIDSLLAPWRAGKFSQYFDWAKIDELKAYGGIRIEDNVVIHKNSVENMTRDLHLA</sequence>
<proteinExistence type="inferred from homology"/>
<comment type="function">
    <text evidence="1">Splits dipeptides with a prolyl residue in the C-terminal position.</text>
</comment>
<comment type="catalytic activity">
    <reaction evidence="1">
        <text>Xaa-L-Pro dipeptide + H2O = an L-alpha-amino acid + L-proline</text>
        <dbReference type="Rhea" id="RHEA:76407"/>
        <dbReference type="ChEBI" id="CHEBI:15377"/>
        <dbReference type="ChEBI" id="CHEBI:59869"/>
        <dbReference type="ChEBI" id="CHEBI:60039"/>
        <dbReference type="ChEBI" id="CHEBI:195196"/>
        <dbReference type="EC" id="3.4.13.9"/>
    </reaction>
</comment>
<comment type="cofactor">
    <cofactor evidence="1">
        <name>Mn(2+)</name>
        <dbReference type="ChEBI" id="CHEBI:29035"/>
    </cofactor>
    <text evidence="1">Binds 2 manganese ions per subunit.</text>
</comment>
<comment type="similarity">
    <text evidence="1">Belongs to the peptidase M24B family. Bacterial-type prolidase subfamily.</text>
</comment>
<name>PEPQ_ERWT9</name>
<feature type="chain" id="PRO_1000140319" description="Xaa-Pro dipeptidase">
    <location>
        <begin position="1"/>
        <end position="443"/>
    </location>
</feature>
<feature type="binding site" evidence="1">
    <location>
        <position position="246"/>
    </location>
    <ligand>
        <name>Mn(2+)</name>
        <dbReference type="ChEBI" id="CHEBI:29035"/>
        <label>2</label>
    </ligand>
</feature>
<feature type="binding site" evidence="1">
    <location>
        <position position="257"/>
    </location>
    <ligand>
        <name>Mn(2+)</name>
        <dbReference type="ChEBI" id="CHEBI:29035"/>
        <label>1</label>
    </ligand>
</feature>
<feature type="binding site" evidence="1">
    <location>
        <position position="257"/>
    </location>
    <ligand>
        <name>Mn(2+)</name>
        <dbReference type="ChEBI" id="CHEBI:29035"/>
        <label>2</label>
    </ligand>
</feature>
<feature type="binding site" evidence="1">
    <location>
        <position position="339"/>
    </location>
    <ligand>
        <name>Mn(2+)</name>
        <dbReference type="ChEBI" id="CHEBI:29035"/>
        <label>1</label>
    </ligand>
</feature>
<feature type="binding site" evidence="1">
    <location>
        <position position="384"/>
    </location>
    <ligand>
        <name>Mn(2+)</name>
        <dbReference type="ChEBI" id="CHEBI:29035"/>
        <label>1</label>
    </ligand>
</feature>
<feature type="binding site" evidence="1">
    <location>
        <position position="423"/>
    </location>
    <ligand>
        <name>Mn(2+)</name>
        <dbReference type="ChEBI" id="CHEBI:29035"/>
        <label>1</label>
    </ligand>
</feature>
<feature type="binding site" evidence="1">
    <location>
        <position position="423"/>
    </location>
    <ligand>
        <name>Mn(2+)</name>
        <dbReference type="ChEBI" id="CHEBI:29035"/>
        <label>2</label>
    </ligand>
</feature>
<accession>B2VFE3</accession>
<dbReference type="EC" id="3.4.13.9" evidence="1"/>
<dbReference type="EMBL" id="CU468135">
    <property type="protein sequence ID" value="CAO95293.1"/>
    <property type="molecule type" value="Genomic_DNA"/>
</dbReference>
<dbReference type="RefSeq" id="WP_012440013.1">
    <property type="nucleotide sequence ID" value="NC_010694.1"/>
</dbReference>
<dbReference type="SMR" id="B2VFE3"/>
<dbReference type="STRING" id="465817.ETA_02470"/>
<dbReference type="MEROPS" id="M24.003"/>
<dbReference type="KEGG" id="eta:ETA_02470"/>
<dbReference type="eggNOG" id="COG0006">
    <property type="taxonomic scope" value="Bacteria"/>
</dbReference>
<dbReference type="HOGENOM" id="CLU_050675_0_0_6"/>
<dbReference type="OrthoDB" id="9806388at2"/>
<dbReference type="Proteomes" id="UP000001726">
    <property type="component" value="Chromosome"/>
</dbReference>
<dbReference type="GO" id="GO:0005829">
    <property type="term" value="C:cytosol"/>
    <property type="evidence" value="ECO:0007669"/>
    <property type="project" value="TreeGrafter"/>
</dbReference>
<dbReference type="GO" id="GO:0004177">
    <property type="term" value="F:aminopeptidase activity"/>
    <property type="evidence" value="ECO:0007669"/>
    <property type="project" value="TreeGrafter"/>
</dbReference>
<dbReference type="GO" id="GO:0046872">
    <property type="term" value="F:metal ion binding"/>
    <property type="evidence" value="ECO:0007669"/>
    <property type="project" value="UniProtKB-KW"/>
</dbReference>
<dbReference type="GO" id="GO:0008235">
    <property type="term" value="F:metalloexopeptidase activity"/>
    <property type="evidence" value="ECO:0007669"/>
    <property type="project" value="UniProtKB-UniRule"/>
</dbReference>
<dbReference type="GO" id="GO:0016795">
    <property type="term" value="F:phosphoric triester hydrolase activity"/>
    <property type="evidence" value="ECO:0007669"/>
    <property type="project" value="InterPro"/>
</dbReference>
<dbReference type="GO" id="GO:0102009">
    <property type="term" value="F:proline dipeptidase activity"/>
    <property type="evidence" value="ECO:0007669"/>
    <property type="project" value="UniProtKB-EC"/>
</dbReference>
<dbReference type="GO" id="GO:0006508">
    <property type="term" value="P:proteolysis"/>
    <property type="evidence" value="ECO:0007669"/>
    <property type="project" value="UniProtKB-KW"/>
</dbReference>
<dbReference type="Gene3D" id="3.90.230.10">
    <property type="entry name" value="Creatinase/methionine aminopeptidase superfamily"/>
    <property type="match status" value="1"/>
</dbReference>
<dbReference type="Gene3D" id="3.40.350.10">
    <property type="entry name" value="Creatinase/prolidase N-terminal domain"/>
    <property type="match status" value="1"/>
</dbReference>
<dbReference type="HAMAP" id="MF_01279">
    <property type="entry name" value="X_Pro_dipeptid"/>
    <property type="match status" value="1"/>
</dbReference>
<dbReference type="InterPro" id="IPR029149">
    <property type="entry name" value="Creatin/AminoP/Spt16_N"/>
</dbReference>
<dbReference type="InterPro" id="IPR036005">
    <property type="entry name" value="Creatinase/aminopeptidase-like"/>
</dbReference>
<dbReference type="InterPro" id="IPR048819">
    <property type="entry name" value="PepQ_N"/>
</dbReference>
<dbReference type="InterPro" id="IPR000994">
    <property type="entry name" value="Pept_M24"/>
</dbReference>
<dbReference type="InterPro" id="IPR001131">
    <property type="entry name" value="Peptidase_M24B_aminopep-P_CS"/>
</dbReference>
<dbReference type="InterPro" id="IPR052433">
    <property type="entry name" value="X-Pro_dipept-like"/>
</dbReference>
<dbReference type="InterPro" id="IPR022846">
    <property type="entry name" value="X_Pro_dipept"/>
</dbReference>
<dbReference type="NCBIfam" id="NF010133">
    <property type="entry name" value="PRK13607.1"/>
    <property type="match status" value="1"/>
</dbReference>
<dbReference type="PANTHER" id="PTHR43226">
    <property type="entry name" value="XAA-PRO AMINOPEPTIDASE 3"/>
    <property type="match status" value="1"/>
</dbReference>
<dbReference type="PANTHER" id="PTHR43226:SF8">
    <property type="entry name" value="XAA-PRO DIPEPTIDASE"/>
    <property type="match status" value="1"/>
</dbReference>
<dbReference type="Pfam" id="PF21216">
    <property type="entry name" value="PepQ_N"/>
    <property type="match status" value="1"/>
</dbReference>
<dbReference type="Pfam" id="PF00557">
    <property type="entry name" value="Peptidase_M24"/>
    <property type="match status" value="1"/>
</dbReference>
<dbReference type="SUPFAM" id="SSF55920">
    <property type="entry name" value="Creatinase/aminopeptidase"/>
    <property type="match status" value="1"/>
</dbReference>
<dbReference type="PROSITE" id="PS00491">
    <property type="entry name" value="PROLINE_PEPTIDASE"/>
    <property type="match status" value="1"/>
</dbReference>
<protein>
    <recommendedName>
        <fullName evidence="1">Xaa-Pro dipeptidase</fullName>
        <shortName evidence="1">X-Pro dipeptidase</shortName>
        <ecNumber evidence="1">3.4.13.9</ecNumber>
    </recommendedName>
    <alternativeName>
        <fullName evidence="1">Imidodipeptidase</fullName>
    </alternativeName>
    <alternativeName>
        <fullName evidence="1">Proline dipeptidase</fullName>
        <shortName evidence="1">Prolidase</shortName>
    </alternativeName>
</protein>